<keyword id="KW-1185">Reference proteome</keyword>
<keyword id="KW-0687">Ribonucleoprotein</keyword>
<keyword id="KW-0689">Ribosomal protein</keyword>
<gene>
    <name evidence="1" type="primary">rpmH</name>
    <name type="ordered locus">SMU_340</name>
</gene>
<organism>
    <name type="scientific">Streptococcus mutans serotype c (strain ATCC 700610 / UA159)</name>
    <dbReference type="NCBI Taxonomy" id="210007"/>
    <lineage>
        <taxon>Bacteria</taxon>
        <taxon>Bacillati</taxon>
        <taxon>Bacillota</taxon>
        <taxon>Bacilli</taxon>
        <taxon>Lactobacillales</taxon>
        <taxon>Streptococcaceae</taxon>
        <taxon>Streptococcus</taxon>
    </lineage>
</organism>
<reference key="1">
    <citation type="journal article" date="2002" name="Proc. Natl. Acad. Sci. U.S.A.">
        <title>Genome sequence of Streptococcus mutans UA159, a cariogenic dental pathogen.</title>
        <authorList>
            <person name="Ajdic D.J."/>
            <person name="McShan W.M."/>
            <person name="McLaughlin R.E."/>
            <person name="Savic G."/>
            <person name="Chang J."/>
            <person name="Carson M.B."/>
            <person name="Primeaux C."/>
            <person name="Tian R."/>
            <person name="Kenton S."/>
            <person name="Jia H.G."/>
            <person name="Lin S.P."/>
            <person name="Qian Y."/>
            <person name="Li S."/>
            <person name="Zhu H."/>
            <person name="Najar F.Z."/>
            <person name="Lai H."/>
            <person name="White J."/>
            <person name="Roe B.A."/>
            <person name="Ferretti J.J."/>
        </authorList>
    </citation>
    <scope>NUCLEOTIDE SEQUENCE [LARGE SCALE GENOMIC DNA]</scope>
    <source>
        <strain>ATCC 700610 / UA159</strain>
    </source>
</reference>
<accession>Q8DVX0</accession>
<name>RL34_STRMU</name>
<dbReference type="EMBL" id="AE014133">
    <property type="protein sequence ID" value="AAN58099.1"/>
    <property type="molecule type" value="Genomic_DNA"/>
</dbReference>
<dbReference type="RefSeq" id="NP_720793.1">
    <property type="nucleotide sequence ID" value="NC_004350.2"/>
</dbReference>
<dbReference type="RefSeq" id="WP_002262507.1">
    <property type="nucleotide sequence ID" value="NC_004350.2"/>
</dbReference>
<dbReference type="SMR" id="Q8DVX0"/>
<dbReference type="STRING" id="210007.SMU_340"/>
<dbReference type="GeneID" id="93860081"/>
<dbReference type="KEGG" id="smu:SMU_340"/>
<dbReference type="PATRIC" id="fig|210007.7.peg.295"/>
<dbReference type="eggNOG" id="COG0230">
    <property type="taxonomic scope" value="Bacteria"/>
</dbReference>
<dbReference type="HOGENOM" id="CLU_129938_2_0_9"/>
<dbReference type="PhylomeDB" id="Q8DVX0"/>
<dbReference type="Proteomes" id="UP000002512">
    <property type="component" value="Chromosome"/>
</dbReference>
<dbReference type="GO" id="GO:1990904">
    <property type="term" value="C:ribonucleoprotein complex"/>
    <property type="evidence" value="ECO:0007669"/>
    <property type="project" value="UniProtKB-KW"/>
</dbReference>
<dbReference type="GO" id="GO:0005840">
    <property type="term" value="C:ribosome"/>
    <property type="evidence" value="ECO:0007669"/>
    <property type="project" value="UniProtKB-KW"/>
</dbReference>
<dbReference type="GO" id="GO:0003735">
    <property type="term" value="F:structural constituent of ribosome"/>
    <property type="evidence" value="ECO:0007669"/>
    <property type="project" value="InterPro"/>
</dbReference>
<dbReference type="GO" id="GO:0006412">
    <property type="term" value="P:translation"/>
    <property type="evidence" value="ECO:0007669"/>
    <property type="project" value="UniProtKB-UniRule"/>
</dbReference>
<dbReference type="FunFam" id="1.10.287.3980:FF:000001">
    <property type="entry name" value="Mitochondrial ribosomal protein L34"/>
    <property type="match status" value="1"/>
</dbReference>
<dbReference type="Gene3D" id="1.10.287.3980">
    <property type="match status" value="1"/>
</dbReference>
<dbReference type="HAMAP" id="MF_00391">
    <property type="entry name" value="Ribosomal_bL34"/>
    <property type="match status" value="1"/>
</dbReference>
<dbReference type="InterPro" id="IPR000271">
    <property type="entry name" value="Ribosomal_bL34"/>
</dbReference>
<dbReference type="InterPro" id="IPR020939">
    <property type="entry name" value="Ribosomal_bL34_CS"/>
</dbReference>
<dbReference type="NCBIfam" id="TIGR01030">
    <property type="entry name" value="rpmH_bact"/>
    <property type="match status" value="1"/>
</dbReference>
<dbReference type="PANTHER" id="PTHR14503:SF4">
    <property type="entry name" value="LARGE RIBOSOMAL SUBUNIT PROTEIN BL34M"/>
    <property type="match status" value="1"/>
</dbReference>
<dbReference type="PANTHER" id="PTHR14503">
    <property type="entry name" value="MITOCHONDRIAL RIBOSOMAL PROTEIN 34 FAMILY MEMBER"/>
    <property type="match status" value="1"/>
</dbReference>
<dbReference type="Pfam" id="PF00468">
    <property type="entry name" value="Ribosomal_L34"/>
    <property type="match status" value="1"/>
</dbReference>
<dbReference type="PROSITE" id="PS00784">
    <property type="entry name" value="RIBOSOMAL_L34"/>
    <property type="match status" value="1"/>
</dbReference>
<protein>
    <recommendedName>
        <fullName evidence="1">Large ribosomal subunit protein bL34</fullName>
    </recommendedName>
    <alternativeName>
        <fullName evidence="3">50S ribosomal protein L34</fullName>
    </alternativeName>
</protein>
<evidence type="ECO:0000255" key="1">
    <source>
        <dbReference type="HAMAP-Rule" id="MF_00391"/>
    </source>
</evidence>
<evidence type="ECO:0000256" key="2">
    <source>
        <dbReference type="SAM" id="MobiDB-lite"/>
    </source>
</evidence>
<evidence type="ECO:0000305" key="3"/>
<proteinExistence type="inferred from homology"/>
<comment type="similarity">
    <text evidence="1">Belongs to the bacterial ribosomal protein bL34 family.</text>
</comment>
<sequence length="44" mass="5345">MKRTFQPSKIRRQRKHGFRHRMSTKNGRRVLAARRRKGRKVLSA</sequence>
<feature type="chain" id="PRO_0000187473" description="Large ribosomal subunit protein bL34">
    <location>
        <begin position="1"/>
        <end position="44"/>
    </location>
</feature>
<feature type="region of interest" description="Disordered" evidence="2">
    <location>
        <begin position="1"/>
        <end position="44"/>
    </location>
</feature>